<gene>
    <name evidence="2" type="primary">dtcA</name>
    <name evidence="5" type="ORF">AOR10_13885</name>
</gene>
<sequence length="984" mass="113311">MLQGVSDLSIKQLLLGVNNVGSVHLSDIPSTRARNFLRGTDPTSFKQTCRALEKIKNSCTESDFKKALLFVRSSSLFDGTEIGQLFIDRCPNESNELDVKYSLSEILRYINQFADELIVLSDCAAKIIKHIDKGNYGTALDYCSNLADMKGTSVFLIRQLSYITNRYQLLELDDSEILRKIDYMKQRISLSRSSFLEGAVTQLSNLRTSYIATSKRIQDIKEDFQGKEIAKSFVQPIPSNLHEFESVLSDYFSFSLFDAFLYIAKFQSFSLQYLPSNQLDVDLFLSYKKISSIKFSPEKMYKTVDEDAGYYYFRESFLFNEQKGALRFQSIHGYYYYDAFRSNLKNLIQKQLVNDYFSNVNSLEQLKYTNSDNYVVKSEKYDSTTCGMLENSTALIHLLERKQGKLDTREQELFVELMSYTRDVGEVCPKEILATISSIAQCFRLKLVVNCLITINNKTQVSEHQLRSTIQDYCIEKFGGDLNLLIQHLYDISPAVAEHLLLTCDEKFLATLFRIVDRPVDAIKVRADMLYWYGKISSEERYLDRAKMLKIDIQINKEKGTIDDSRIYVDPFKYTQWFEDQMVGKLTMAIDNLLISEHAVVNPNWKHMGVGTTGDVIELLLACYKEFCDNKSFGIASYLGRRIRHGTFEGTASTELKALYTNEEYKHLFEDKEFATKFDEWLNQYELMISELKKNALQIKSKRKPSGCFSTDIDTPQKKIVADQLIFEILRIYSKRSGVIRLPSVIIDYCWRLVELDLTATKKLLSEKKSSHGVFSYTPKFGSSSYKRQYSKFSQEVNSLTSQKFGLMASWFNKPNYASPSTDIYLLFNAVISEVKDSFRDFEPKIDQGQRSFTINGGTYYVIYDALFVLIHNAARHGKSDGKMNFFVSIPEDRTNAIRLQLFTELDSIDSVDKALSNIEEALLNTQGDADEFDNKSGMKKLKKLENEGSISELQFYSKPEENMLCFDFHFELDSRGKYDDLDS</sequence>
<protein>
    <recommendedName>
        <fullName evidence="3">Detocs histidine-protein kinase DtcA</fullName>
        <ecNumber evidence="4">2.7.13.3</ecNumber>
    </recommendedName>
    <alternativeName>
        <fullName evidence="2">Sensor kinase DtcA</fullName>
    </alternativeName>
</protein>
<evidence type="ECO:0000269" key="1">
    <source>
    </source>
</evidence>
<evidence type="ECO:0000303" key="2">
    <source>
    </source>
</evidence>
<evidence type="ECO:0000305" key="3"/>
<evidence type="ECO:0000305" key="4">
    <source>
    </source>
</evidence>
<evidence type="ECO:0000312" key="5">
    <source>
        <dbReference type="EMBL" id="KPM92283.1"/>
    </source>
</evidence>
<feature type="chain" id="PRO_0000459335" description="Detocs histidine-protein kinase DtcA">
    <location>
        <begin position="1"/>
        <end position="984"/>
    </location>
</feature>
<feature type="modified residue" description="Phosphohistidine; by autocatalysis" evidence="4">
    <location>
        <position position="645"/>
    </location>
</feature>
<feature type="mutagenesis site" description="No longer confers bacteriophage T5 resistance." evidence="1">
    <original>H</original>
    <variation>N</variation>
    <location>
        <position position="645"/>
    </location>
</feature>
<keyword id="KW-0051">Antiviral defense</keyword>
<keyword id="KW-0067">ATP-binding</keyword>
<keyword id="KW-0418">Kinase</keyword>
<keyword id="KW-0547">Nucleotide-binding</keyword>
<keyword id="KW-0597">Phosphoprotein</keyword>
<keyword id="KW-0808">Transferase</keyword>
<keyword id="KW-0902">Two-component regulatory system</keyword>
<comment type="function">
    <text evidence="1 4">Sensor-kinase member of the two-component regulatory system Detocs that confers resistance to bacteriophage (PubMed:37595565). When the system (DtcA-DtcB-DtcC) is expressed in a susceptible E.coli (strain MG1655) it confers resistance to bacteriophages T2, T4, T5, T6 and SECphi27 (PubMed:37595565). Detocs inhibits T5 infection leading to growth arrest but not complete cell lysis, during SECphi27 infection leads to cell lysis (PubMed:37595565). DtcA (this subunit) probably autophosphorylates upon sensing viral infection, and subsequently transfers the phosphate signal to DtcC which activates it, leading to an antiviral defense; DtcB may scavenge phosphorylation signals from accidental activation of DtcA (Probable) (PubMed:37595565).</text>
</comment>
<comment type="catalytic activity">
    <reaction evidence="4">
        <text>ATP + protein L-histidine = ADP + protein N-phospho-L-histidine.</text>
        <dbReference type="EC" id="2.7.13.3"/>
    </reaction>
</comment>
<comment type="PTM">
    <text evidence="4">Autophosphorylated.</text>
</comment>
<proteinExistence type="evidence at protein level"/>
<accession>P0DW68</accession>
<reference key="1">
    <citation type="submission" date="2015-09" db="EMBL/GenBank/DDBJ databases">
        <title>Draft Genome of Vibrio alginolyticus UCD-32C.</title>
        <authorList>
            <person name="Krusor M."/>
            <person name="Coil D.A."/>
            <person name="Lang J.M."/>
            <person name="Eisen J.A."/>
            <person name="Alexiev A."/>
        </authorList>
    </citation>
    <scope>NUCLEOTIDE SEQUENCE [LARGE SCALE GENOMIC DNA]</scope>
    <source>
        <strain>UCD-32C</strain>
    </source>
</reference>
<reference key="2">
    <citation type="journal article" date="2023" name="Cell">
        <title>A conserved family of immune effectors cleaves cellular ATP upon viral infection.</title>
        <authorList>
            <person name="Rousset F."/>
            <person name="Yirmiya E."/>
            <person name="Nesher S."/>
            <person name="Brandis A."/>
            <person name="Mehlman T."/>
            <person name="Itkin M."/>
            <person name="Malitsky S."/>
            <person name="Millman A."/>
            <person name="Melamed S."/>
            <person name="Sorek R."/>
        </authorList>
    </citation>
    <scope>FUNCTION</scope>
    <scope>FUNCTION IN VIRAL DEFENSE</scope>
    <scope>POSSIBLE PHOSPHORYLATION AT HIS-645</scope>
    <scope>MUTAGENESIS OF HIS-645</scope>
    <source>
        <strain>UCD-32C</strain>
    </source>
</reference>
<organism>
    <name type="scientific">Vibrio alginolyticus</name>
    <dbReference type="NCBI Taxonomy" id="663"/>
    <lineage>
        <taxon>Bacteria</taxon>
        <taxon>Pseudomonadati</taxon>
        <taxon>Pseudomonadota</taxon>
        <taxon>Gammaproteobacteria</taxon>
        <taxon>Vibrionales</taxon>
        <taxon>Vibrionaceae</taxon>
        <taxon>Vibrio</taxon>
    </lineage>
</organism>
<dbReference type="EC" id="2.7.13.3" evidence="4"/>
<dbReference type="EMBL" id="LJTF01000009">
    <property type="protein sequence ID" value="KPM92283.1"/>
    <property type="molecule type" value="Genomic_DNA"/>
</dbReference>
<dbReference type="RefSeq" id="WP_054574994.1">
    <property type="nucleotide sequence ID" value="NZ_LJTF01000009.1"/>
</dbReference>
<dbReference type="SMR" id="P0DW68"/>
<dbReference type="iPTMnet" id="P0DW68"/>
<dbReference type="GO" id="GO:0005524">
    <property type="term" value="F:ATP binding"/>
    <property type="evidence" value="ECO:0007669"/>
    <property type="project" value="UniProtKB-KW"/>
</dbReference>
<dbReference type="GO" id="GO:0016301">
    <property type="term" value="F:kinase activity"/>
    <property type="evidence" value="ECO:0007669"/>
    <property type="project" value="UniProtKB-KW"/>
</dbReference>
<dbReference type="GO" id="GO:0051607">
    <property type="term" value="P:defense response to virus"/>
    <property type="evidence" value="ECO:0007669"/>
    <property type="project" value="UniProtKB-KW"/>
</dbReference>
<dbReference type="GO" id="GO:0000160">
    <property type="term" value="P:phosphorelay signal transduction system"/>
    <property type="evidence" value="ECO:0007669"/>
    <property type="project" value="UniProtKB-KW"/>
</dbReference>
<name>DTCA_VIBAL</name>